<feature type="chain" id="PRO_0000202027" description="Uncharacterized protein MG259 homolog">
    <location>
        <begin position="1"/>
        <end position="453"/>
    </location>
</feature>
<feature type="domain" description="YrdC-like" evidence="1">
    <location>
        <begin position="276"/>
        <end position="437"/>
    </location>
</feature>
<sequence>MNLYELFLNQKLLYGTDPHFNGVFLTLLEKFGLHFKDLTALWKHAKTITDFDEQGIVNALKAYFVDQLPLPYITGSVKLGSLTFKTQPGVFIPRADSLALLKVVKAQNLKTAVDLCCGSGTLAIALKKRFPHLNVYGSDLNPQALQLAAQNARLNMVEVQWIEADFLAALAQVNTPIDLIITNPPYLNESQLDQTLNHEPRNSLVADGNGILFYQKLYNFLLGNRQVKQVILECSPTQKKEFLALFSIFKTSEIYTSHKQFIGLSIDNTKLPVLKIAQTKQIKALLDKGMTAIIPTDTQIGLMSYCQQDLDHIKQRDPNKHYVQFLAPSQINQLPKQLQKLAKLFWPGAYTFIVDGQSYRLPNSPQLLKLLKTVGLIYCTSANQAKQKPFGKLSAYQNDPYWVQQNCFIVQNSFKSNNEPSLIYNLDTKQIVRGSSTQLQRFQALLAKHKLRH</sequence>
<name>Y362_MYCPN</name>
<keyword id="KW-1185">Reference proteome</keyword>
<evidence type="ECO:0000255" key="1">
    <source>
        <dbReference type="PROSITE-ProRule" id="PRU00518"/>
    </source>
</evidence>
<gene>
    <name type="ordered locus">MPN_362</name>
    <name type="ORF">H91_orf453</name>
    <name type="ORF">MP474</name>
</gene>
<accession>P75419</accession>
<organism>
    <name type="scientific">Mycoplasma pneumoniae (strain ATCC 29342 / M129 / Subtype 1)</name>
    <name type="common">Mycoplasmoides pneumoniae</name>
    <dbReference type="NCBI Taxonomy" id="272634"/>
    <lineage>
        <taxon>Bacteria</taxon>
        <taxon>Bacillati</taxon>
        <taxon>Mycoplasmatota</taxon>
        <taxon>Mycoplasmoidales</taxon>
        <taxon>Mycoplasmoidaceae</taxon>
        <taxon>Mycoplasmoides</taxon>
    </lineage>
</organism>
<protein>
    <recommendedName>
        <fullName>Uncharacterized protein MG259 homolog</fullName>
    </recommendedName>
</protein>
<proteinExistence type="predicted"/>
<dbReference type="EMBL" id="U00089">
    <property type="protein sequence ID" value="AAB96122.1"/>
    <property type="molecule type" value="Genomic_DNA"/>
</dbReference>
<dbReference type="PIR" id="S73800">
    <property type="entry name" value="S73800"/>
</dbReference>
<dbReference type="RefSeq" id="NP_110050.1">
    <property type="nucleotide sequence ID" value="NC_000912.1"/>
</dbReference>
<dbReference type="RefSeq" id="WP_010874718.1">
    <property type="nucleotide sequence ID" value="NZ_OU342337.1"/>
</dbReference>
<dbReference type="SMR" id="P75419"/>
<dbReference type="IntAct" id="P75419">
    <property type="interactions" value="1"/>
</dbReference>
<dbReference type="STRING" id="272634.MPN_362"/>
<dbReference type="EnsemblBacteria" id="AAB96122">
    <property type="protein sequence ID" value="AAB96122"/>
    <property type="gene ID" value="MPN_362"/>
</dbReference>
<dbReference type="KEGG" id="mpn:MPN_362"/>
<dbReference type="PATRIC" id="fig|272634.6.peg.389"/>
<dbReference type="HOGENOM" id="CLU_603857_0_0_14"/>
<dbReference type="OrthoDB" id="9800643at2"/>
<dbReference type="BioCyc" id="MPNE272634:G1GJ3-570-MONOMER"/>
<dbReference type="Proteomes" id="UP000000808">
    <property type="component" value="Chromosome"/>
</dbReference>
<dbReference type="GO" id="GO:0003725">
    <property type="term" value="F:double-stranded RNA binding"/>
    <property type="evidence" value="ECO:0007669"/>
    <property type="project" value="InterPro"/>
</dbReference>
<dbReference type="GO" id="GO:0008170">
    <property type="term" value="F:N-methyltransferase activity"/>
    <property type="evidence" value="ECO:0007669"/>
    <property type="project" value="UniProtKB-ARBA"/>
</dbReference>
<dbReference type="GO" id="GO:0008757">
    <property type="term" value="F:S-adenosylmethionine-dependent methyltransferase activity"/>
    <property type="evidence" value="ECO:0007669"/>
    <property type="project" value="UniProtKB-ARBA"/>
</dbReference>
<dbReference type="GO" id="GO:0032259">
    <property type="term" value="P:methylation"/>
    <property type="evidence" value="ECO:0007669"/>
    <property type="project" value="InterPro"/>
</dbReference>
<dbReference type="CDD" id="cd02440">
    <property type="entry name" value="AdoMet_MTases"/>
    <property type="match status" value="1"/>
</dbReference>
<dbReference type="Gene3D" id="3.90.870.10">
    <property type="entry name" value="DHBP synthase"/>
    <property type="match status" value="1"/>
</dbReference>
<dbReference type="Gene3D" id="3.40.50.150">
    <property type="entry name" value="Vaccinia Virus protein VP39"/>
    <property type="match status" value="1"/>
</dbReference>
<dbReference type="InterPro" id="IPR017945">
    <property type="entry name" value="DHBP_synth_RibB-like_a/b_dom"/>
</dbReference>
<dbReference type="InterPro" id="IPR002052">
    <property type="entry name" value="DNA_methylase_N6_adenine_CS"/>
</dbReference>
<dbReference type="InterPro" id="IPR050320">
    <property type="entry name" value="N5-glutamine_MTase"/>
</dbReference>
<dbReference type="InterPro" id="IPR029063">
    <property type="entry name" value="SAM-dependent_MTases_sf"/>
</dbReference>
<dbReference type="InterPro" id="IPR007848">
    <property type="entry name" value="Small_mtfrase_dom"/>
</dbReference>
<dbReference type="InterPro" id="IPR006070">
    <property type="entry name" value="Sua5-like_dom"/>
</dbReference>
<dbReference type="PANTHER" id="PTHR18895">
    <property type="entry name" value="HEMK METHYLTRANSFERASE"/>
    <property type="match status" value="1"/>
</dbReference>
<dbReference type="PANTHER" id="PTHR18895:SF74">
    <property type="entry name" value="MTRF1L RELEASE FACTOR GLUTAMINE METHYLTRANSFERASE"/>
    <property type="match status" value="1"/>
</dbReference>
<dbReference type="Pfam" id="PF05175">
    <property type="entry name" value="MTS"/>
    <property type="match status" value="1"/>
</dbReference>
<dbReference type="Pfam" id="PF01300">
    <property type="entry name" value="Sua5_yciO_yrdC"/>
    <property type="match status" value="1"/>
</dbReference>
<dbReference type="SUPFAM" id="SSF53335">
    <property type="entry name" value="S-adenosyl-L-methionine-dependent methyltransferases"/>
    <property type="match status" value="1"/>
</dbReference>
<dbReference type="SUPFAM" id="SSF55821">
    <property type="entry name" value="YrdC/RibB"/>
    <property type="match status" value="1"/>
</dbReference>
<dbReference type="PROSITE" id="PS00092">
    <property type="entry name" value="N6_MTASE"/>
    <property type="match status" value="1"/>
</dbReference>
<dbReference type="PROSITE" id="PS51163">
    <property type="entry name" value="YRDC"/>
    <property type="match status" value="1"/>
</dbReference>
<reference key="1">
    <citation type="journal article" date="1996" name="Nucleic Acids Res.">
        <title>Complete sequence analysis of the genome of the bacterium Mycoplasma pneumoniae.</title>
        <authorList>
            <person name="Himmelreich R."/>
            <person name="Hilbert H."/>
            <person name="Plagens H."/>
            <person name="Pirkl E."/>
            <person name="Li B.-C."/>
            <person name="Herrmann R."/>
        </authorList>
    </citation>
    <scope>NUCLEOTIDE SEQUENCE [LARGE SCALE GENOMIC DNA]</scope>
    <source>
        <strain>ATCC 29342 / M129 / Subtype 1</strain>
    </source>
</reference>